<feature type="chain" id="PRO_0000432373" description="Protein CEBPZOS">
    <location>
        <begin position="1"/>
        <end position="80"/>
    </location>
</feature>
<feature type="transmembrane region" description="Helical" evidence="2">
    <location>
        <begin position="15"/>
        <end position="31"/>
    </location>
</feature>
<gene>
    <name evidence="4" type="primary">Cebpzos</name>
</gene>
<accession>Q8BTE5</accession>
<reference key="1">
    <citation type="journal article" date="2005" name="Science">
        <title>The transcriptional landscape of the mammalian genome.</title>
        <authorList>
            <person name="Carninci P."/>
            <person name="Kasukawa T."/>
            <person name="Katayama S."/>
            <person name="Gough J."/>
            <person name="Frith M.C."/>
            <person name="Maeda N."/>
            <person name="Oyama R."/>
            <person name="Ravasi T."/>
            <person name="Lenhard B."/>
            <person name="Wells C."/>
            <person name="Kodzius R."/>
            <person name="Shimokawa K."/>
            <person name="Bajic V.B."/>
            <person name="Brenner S.E."/>
            <person name="Batalov S."/>
            <person name="Forrest A.R."/>
            <person name="Zavolan M."/>
            <person name="Davis M.J."/>
            <person name="Wilming L.G."/>
            <person name="Aidinis V."/>
            <person name="Allen J.E."/>
            <person name="Ambesi-Impiombato A."/>
            <person name="Apweiler R."/>
            <person name="Aturaliya R.N."/>
            <person name="Bailey T.L."/>
            <person name="Bansal M."/>
            <person name="Baxter L."/>
            <person name="Beisel K.W."/>
            <person name="Bersano T."/>
            <person name="Bono H."/>
            <person name="Chalk A.M."/>
            <person name="Chiu K.P."/>
            <person name="Choudhary V."/>
            <person name="Christoffels A."/>
            <person name="Clutterbuck D.R."/>
            <person name="Crowe M.L."/>
            <person name="Dalla E."/>
            <person name="Dalrymple B.P."/>
            <person name="de Bono B."/>
            <person name="Della Gatta G."/>
            <person name="di Bernardo D."/>
            <person name="Down T."/>
            <person name="Engstrom P."/>
            <person name="Fagiolini M."/>
            <person name="Faulkner G."/>
            <person name="Fletcher C.F."/>
            <person name="Fukushima T."/>
            <person name="Furuno M."/>
            <person name="Futaki S."/>
            <person name="Gariboldi M."/>
            <person name="Georgii-Hemming P."/>
            <person name="Gingeras T.R."/>
            <person name="Gojobori T."/>
            <person name="Green R.E."/>
            <person name="Gustincich S."/>
            <person name="Harbers M."/>
            <person name="Hayashi Y."/>
            <person name="Hensch T.K."/>
            <person name="Hirokawa N."/>
            <person name="Hill D."/>
            <person name="Huminiecki L."/>
            <person name="Iacono M."/>
            <person name="Ikeo K."/>
            <person name="Iwama A."/>
            <person name="Ishikawa T."/>
            <person name="Jakt M."/>
            <person name="Kanapin A."/>
            <person name="Katoh M."/>
            <person name="Kawasawa Y."/>
            <person name="Kelso J."/>
            <person name="Kitamura H."/>
            <person name="Kitano H."/>
            <person name="Kollias G."/>
            <person name="Krishnan S.P."/>
            <person name="Kruger A."/>
            <person name="Kummerfeld S.K."/>
            <person name="Kurochkin I.V."/>
            <person name="Lareau L.F."/>
            <person name="Lazarevic D."/>
            <person name="Lipovich L."/>
            <person name="Liu J."/>
            <person name="Liuni S."/>
            <person name="McWilliam S."/>
            <person name="Madan Babu M."/>
            <person name="Madera M."/>
            <person name="Marchionni L."/>
            <person name="Matsuda H."/>
            <person name="Matsuzawa S."/>
            <person name="Miki H."/>
            <person name="Mignone F."/>
            <person name="Miyake S."/>
            <person name="Morris K."/>
            <person name="Mottagui-Tabar S."/>
            <person name="Mulder N."/>
            <person name="Nakano N."/>
            <person name="Nakauchi H."/>
            <person name="Ng P."/>
            <person name="Nilsson R."/>
            <person name="Nishiguchi S."/>
            <person name="Nishikawa S."/>
            <person name="Nori F."/>
            <person name="Ohara O."/>
            <person name="Okazaki Y."/>
            <person name="Orlando V."/>
            <person name="Pang K.C."/>
            <person name="Pavan W.J."/>
            <person name="Pavesi G."/>
            <person name="Pesole G."/>
            <person name="Petrovsky N."/>
            <person name="Piazza S."/>
            <person name="Reed J."/>
            <person name="Reid J.F."/>
            <person name="Ring B.Z."/>
            <person name="Ringwald M."/>
            <person name="Rost B."/>
            <person name="Ruan Y."/>
            <person name="Salzberg S.L."/>
            <person name="Sandelin A."/>
            <person name="Schneider C."/>
            <person name="Schoenbach C."/>
            <person name="Sekiguchi K."/>
            <person name="Semple C.A."/>
            <person name="Seno S."/>
            <person name="Sessa L."/>
            <person name="Sheng Y."/>
            <person name="Shibata Y."/>
            <person name="Shimada H."/>
            <person name="Shimada K."/>
            <person name="Silva D."/>
            <person name="Sinclair B."/>
            <person name="Sperling S."/>
            <person name="Stupka E."/>
            <person name="Sugiura K."/>
            <person name="Sultana R."/>
            <person name="Takenaka Y."/>
            <person name="Taki K."/>
            <person name="Tammoja K."/>
            <person name="Tan S.L."/>
            <person name="Tang S."/>
            <person name="Taylor M.S."/>
            <person name="Tegner J."/>
            <person name="Teichmann S.A."/>
            <person name="Ueda H.R."/>
            <person name="van Nimwegen E."/>
            <person name="Verardo R."/>
            <person name="Wei C.L."/>
            <person name="Yagi K."/>
            <person name="Yamanishi H."/>
            <person name="Zabarovsky E."/>
            <person name="Zhu S."/>
            <person name="Zimmer A."/>
            <person name="Hide W."/>
            <person name="Bult C."/>
            <person name="Grimmond S.M."/>
            <person name="Teasdale R.D."/>
            <person name="Liu E.T."/>
            <person name="Brusic V."/>
            <person name="Quackenbush J."/>
            <person name="Wahlestedt C."/>
            <person name="Mattick J.S."/>
            <person name="Hume D.A."/>
            <person name="Kai C."/>
            <person name="Sasaki D."/>
            <person name="Tomaru Y."/>
            <person name="Fukuda S."/>
            <person name="Kanamori-Katayama M."/>
            <person name="Suzuki M."/>
            <person name="Aoki J."/>
            <person name="Arakawa T."/>
            <person name="Iida J."/>
            <person name="Imamura K."/>
            <person name="Itoh M."/>
            <person name="Kato T."/>
            <person name="Kawaji H."/>
            <person name="Kawagashira N."/>
            <person name="Kawashima T."/>
            <person name="Kojima M."/>
            <person name="Kondo S."/>
            <person name="Konno H."/>
            <person name="Nakano K."/>
            <person name="Ninomiya N."/>
            <person name="Nishio T."/>
            <person name="Okada M."/>
            <person name="Plessy C."/>
            <person name="Shibata K."/>
            <person name="Shiraki T."/>
            <person name="Suzuki S."/>
            <person name="Tagami M."/>
            <person name="Waki K."/>
            <person name="Watahiki A."/>
            <person name="Okamura-Oho Y."/>
            <person name="Suzuki H."/>
            <person name="Kawai J."/>
            <person name="Hayashizaki Y."/>
        </authorList>
    </citation>
    <scope>NUCLEOTIDE SEQUENCE [LARGE SCALE MRNA]</scope>
    <source>
        <strain>C57BL/6J</strain>
        <tissue>Embryo</tissue>
    </source>
</reference>
<reference key="2">
    <citation type="journal article" date="2009" name="PLoS Biol.">
        <title>Lineage-specific biology revealed by a finished genome assembly of the mouse.</title>
        <authorList>
            <person name="Church D.M."/>
            <person name="Goodstadt L."/>
            <person name="Hillier L.W."/>
            <person name="Zody M.C."/>
            <person name="Goldstein S."/>
            <person name="She X."/>
            <person name="Bult C.J."/>
            <person name="Agarwala R."/>
            <person name="Cherry J.L."/>
            <person name="DiCuccio M."/>
            <person name="Hlavina W."/>
            <person name="Kapustin Y."/>
            <person name="Meric P."/>
            <person name="Maglott D."/>
            <person name="Birtle Z."/>
            <person name="Marques A.C."/>
            <person name="Graves T."/>
            <person name="Zhou S."/>
            <person name="Teague B."/>
            <person name="Potamousis K."/>
            <person name="Churas C."/>
            <person name="Place M."/>
            <person name="Herschleb J."/>
            <person name="Runnheim R."/>
            <person name="Forrest D."/>
            <person name="Amos-Landgraf J."/>
            <person name="Schwartz D.C."/>
            <person name="Cheng Z."/>
            <person name="Lindblad-Toh K."/>
            <person name="Eichler E.E."/>
            <person name="Ponting C.P."/>
        </authorList>
    </citation>
    <scope>NUCLEOTIDE SEQUENCE [LARGE SCALE GENOMIC DNA]</scope>
    <source>
        <strain>C57BL/6J</strain>
    </source>
</reference>
<organism>
    <name type="scientific">Mus musculus</name>
    <name type="common">Mouse</name>
    <dbReference type="NCBI Taxonomy" id="10090"/>
    <lineage>
        <taxon>Eukaryota</taxon>
        <taxon>Metazoa</taxon>
        <taxon>Chordata</taxon>
        <taxon>Craniata</taxon>
        <taxon>Vertebrata</taxon>
        <taxon>Euteleostomi</taxon>
        <taxon>Mammalia</taxon>
        <taxon>Eutheria</taxon>
        <taxon>Euarchontoglires</taxon>
        <taxon>Glires</taxon>
        <taxon>Rodentia</taxon>
        <taxon>Myomorpha</taxon>
        <taxon>Muroidea</taxon>
        <taxon>Muridae</taxon>
        <taxon>Murinae</taxon>
        <taxon>Mus</taxon>
        <taxon>Mus</taxon>
    </lineage>
</organism>
<proteinExistence type="inferred from homology"/>
<dbReference type="EMBL" id="AK003199">
    <property type="protein sequence ID" value="BAC25024.2"/>
    <property type="molecule type" value="mRNA"/>
</dbReference>
<dbReference type="EMBL" id="AC154274">
    <property type="status" value="NOT_ANNOTATED_CDS"/>
    <property type="molecule type" value="Genomic_DNA"/>
</dbReference>
<dbReference type="CCDS" id="CCDS50183.1"/>
<dbReference type="RefSeq" id="NP_001170873.1">
    <property type="nucleotide sequence ID" value="NM_001177402.1"/>
</dbReference>
<dbReference type="RefSeq" id="NP_001170874.1">
    <property type="nucleotide sequence ID" value="NM_001177403.1"/>
</dbReference>
<dbReference type="RefSeq" id="XP_006524910.1">
    <property type="nucleotide sequence ID" value="XM_006524847.4"/>
</dbReference>
<dbReference type="RefSeq" id="XP_030105878.1">
    <property type="nucleotide sequence ID" value="XM_030250018.2"/>
</dbReference>
<dbReference type="SMR" id="Q8BTE5"/>
<dbReference type="FunCoup" id="Q8BTE5">
    <property type="interactions" value="21"/>
</dbReference>
<dbReference type="STRING" id="10090.ENSMUSP00000068772"/>
<dbReference type="PhosphoSitePlus" id="Q8BTE5"/>
<dbReference type="PaxDb" id="10090-ENSMUSP00000068772"/>
<dbReference type="PeptideAtlas" id="Q8BTE5"/>
<dbReference type="ProteomicsDB" id="281371"/>
<dbReference type="Pumba" id="Q8BTE5"/>
<dbReference type="Antibodypedia" id="66172">
    <property type="antibodies" value="3 antibodies from 3 providers"/>
</dbReference>
<dbReference type="Ensembl" id="ENSMUST00000063817.8">
    <property type="protein sequence ID" value="ENSMUSP00000068772.5"/>
    <property type="gene ID" value="ENSMUSG00000062691.12"/>
</dbReference>
<dbReference type="Ensembl" id="ENSMUST00000180077.8">
    <property type="protein sequence ID" value="ENSMUSP00000136411.2"/>
    <property type="gene ID" value="ENSMUSG00000062691.12"/>
</dbReference>
<dbReference type="Ensembl" id="ENSMUST00000192288.3">
    <property type="protein sequence ID" value="ENSMUSP00000141923.3"/>
    <property type="gene ID" value="ENSMUSG00000062691.12"/>
</dbReference>
<dbReference type="Ensembl" id="ENSMUST00000249133.1">
    <property type="protein sequence ID" value="ENSMUSP00000159589.1"/>
    <property type="gene ID" value="ENSMUSG00000062691.12"/>
</dbReference>
<dbReference type="GeneID" id="68554"/>
<dbReference type="KEGG" id="mmu:68554"/>
<dbReference type="UCSC" id="uc008dpj.2">
    <property type="organism name" value="mouse"/>
</dbReference>
<dbReference type="AGR" id="MGI:1915804"/>
<dbReference type="CTD" id="100505876"/>
<dbReference type="MGI" id="MGI:1915804">
    <property type="gene designation" value="Cebpzos"/>
</dbReference>
<dbReference type="VEuPathDB" id="HostDB:ENSMUSG00000062691"/>
<dbReference type="eggNOG" id="ENOG502ST5Z">
    <property type="taxonomic scope" value="Eukaryota"/>
</dbReference>
<dbReference type="GeneTree" id="ENSGT00500000045333"/>
<dbReference type="HOGENOM" id="CLU_185538_0_0_1"/>
<dbReference type="InParanoid" id="Q8BTE5"/>
<dbReference type="OMA" id="HMMNNSR"/>
<dbReference type="OrthoDB" id="5804148at2759"/>
<dbReference type="PhylomeDB" id="Q8BTE5"/>
<dbReference type="TreeFam" id="TF353548"/>
<dbReference type="BioGRID-ORCS" id="68554">
    <property type="hits" value="2 hits in 73 CRISPR screens"/>
</dbReference>
<dbReference type="ChiTaRS" id="Cebpzos">
    <property type="organism name" value="mouse"/>
</dbReference>
<dbReference type="PRO" id="PR:Q8BTE5"/>
<dbReference type="Proteomes" id="UP000000589">
    <property type="component" value="Chromosome 17"/>
</dbReference>
<dbReference type="RNAct" id="Q8BTE5">
    <property type="molecule type" value="protein"/>
</dbReference>
<dbReference type="Bgee" id="ENSMUSG00000062691">
    <property type="expression patterns" value="Expressed in right kidney and 255 other cell types or tissues"/>
</dbReference>
<dbReference type="ExpressionAtlas" id="Q8BTE5">
    <property type="expression patterns" value="baseline and differential"/>
</dbReference>
<dbReference type="GO" id="GO:0031966">
    <property type="term" value="C:mitochondrial membrane"/>
    <property type="evidence" value="ECO:0007669"/>
    <property type="project" value="UniProtKB-SubCell"/>
</dbReference>
<dbReference type="InterPro" id="IPR037764">
    <property type="entry name" value="CEBPZOS"/>
</dbReference>
<dbReference type="PANTHER" id="PTHR38001">
    <property type="entry name" value="PROTEIN CEBPZOS"/>
    <property type="match status" value="1"/>
</dbReference>
<dbReference type="PANTHER" id="PTHR38001:SF1">
    <property type="entry name" value="PROTEIN CEBPZOS"/>
    <property type="match status" value="1"/>
</dbReference>
<keyword id="KW-0472">Membrane</keyword>
<keyword id="KW-0496">Mitochondrion</keyword>
<keyword id="KW-1185">Reference proteome</keyword>
<keyword id="KW-0812">Transmembrane</keyword>
<keyword id="KW-1133">Transmembrane helix</keyword>
<evidence type="ECO:0000250" key="1">
    <source>
        <dbReference type="UniProtKB" id="A8MTT3"/>
    </source>
</evidence>
<evidence type="ECO:0000255" key="2"/>
<evidence type="ECO:0000305" key="3"/>
<evidence type="ECO:0000312" key="4">
    <source>
        <dbReference type="MGI" id="MGI:1915804"/>
    </source>
</evidence>
<sequence length="80" mass="9286">MARIMEPLARKIFKGVLAAELVGVAGAYCLFKKMHSSQDFRQTMSKKFPFILEVYYKSIEQSGMYGVREKDEEKWLTSKN</sequence>
<protein>
    <recommendedName>
        <fullName evidence="3">Protein CEBPZOS</fullName>
    </recommendedName>
</protein>
<comment type="subcellular location">
    <subcellularLocation>
        <location evidence="1">Mitochondrion membrane</location>
        <topology evidence="2">Single-pass membrane protein</topology>
    </subcellularLocation>
</comment>
<name>CEBOS_MOUSE</name>